<proteinExistence type="inferred from homology"/>
<dbReference type="EMBL" id="AB049216">
    <property type="protein sequence ID" value="BAB85871.1"/>
    <property type="molecule type" value="Genomic_DNA"/>
</dbReference>
<dbReference type="GO" id="GO:0009507">
    <property type="term" value="C:chloroplast"/>
    <property type="evidence" value="ECO:0007669"/>
    <property type="project" value="UniProtKB-SubCell"/>
</dbReference>
<dbReference type="GO" id="GO:0003723">
    <property type="term" value="F:RNA binding"/>
    <property type="evidence" value="ECO:0007669"/>
    <property type="project" value="UniProtKB-KW"/>
</dbReference>
<dbReference type="GO" id="GO:0006397">
    <property type="term" value="P:mRNA processing"/>
    <property type="evidence" value="ECO:0007669"/>
    <property type="project" value="UniProtKB-KW"/>
</dbReference>
<dbReference type="GO" id="GO:0008380">
    <property type="term" value="P:RNA splicing"/>
    <property type="evidence" value="ECO:0007669"/>
    <property type="project" value="UniProtKB-UniRule"/>
</dbReference>
<dbReference type="GO" id="GO:0008033">
    <property type="term" value="P:tRNA processing"/>
    <property type="evidence" value="ECO:0007669"/>
    <property type="project" value="UniProtKB-KW"/>
</dbReference>
<dbReference type="HAMAP" id="MF_01390">
    <property type="entry name" value="MatK"/>
    <property type="match status" value="1"/>
</dbReference>
<dbReference type="InterPro" id="IPR024937">
    <property type="entry name" value="Domain_X"/>
</dbReference>
<dbReference type="InterPro" id="IPR002866">
    <property type="entry name" value="Maturase_MatK"/>
</dbReference>
<dbReference type="InterPro" id="IPR024942">
    <property type="entry name" value="Maturase_MatK_N"/>
</dbReference>
<dbReference type="PANTHER" id="PTHR34811">
    <property type="entry name" value="MATURASE K"/>
    <property type="match status" value="1"/>
</dbReference>
<dbReference type="PANTHER" id="PTHR34811:SF1">
    <property type="entry name" value="MATURASE K"/>
    <property type="match status" value="1"/>
</dbReference>
<dbReference type="Pfam" id="PF01348">
    <property type="entry name" value="Intron_maturas2"/>
    <property type="match status" value="1"/>
</dbReference>
<dbReference type="Pfam" id="PF01824">
    <property type="entry name" value="MatK_N"/>
    <property type="match status" value="1"/>
</dbReference>
<accession>Q8SKV2</accession>
<comment type="function">
    <text evidence="1">Usually encoded in the trnK tRNA gene intron. Probably assists in splicing its own and other chloroplast group II introns.</text>
</comment>
<comment type="subcellular location">
    <subcellularLocation>
        <location>Plastid</location>
        <location>Chloroplast</location>
    </subcellularLocation>
</comment>
<comment type="similarity">
    <text evidence="1">Belongs to the intron maturase 2 family. MatK subfamily.</text>
</comment>
<reference key="1">
    <citation type="journal article" date="2002" name="Plant Syst. Evol.">
        <title>Multiple occurrences of triploid formation in Globba (Zingiberaceae) from molecular evidence.</title>
        <authorList>
            <person name="Takano A."/>
            <person name="Okada H."/>
        </authorList>
    </citation>
    <scope>NUCLEOTIDE SEQUENCE [GENOMIC DNA]</scope>
    <source>
        <tissue>Leaf</tissue>
    </source>
</reference>
<name>MATK_ALPZE</name>
<keyword id="KW-0150">Chloroplast</keyword>
<keyword id="KW-0507">mRNA processing</keyword>
<keyword id="KW-0934">Plastid</keyword>
<keyword id="KW-0694">RNA-binding</keyword>
<keyword id="KW-0819">tRNA processing</keyword>
<feature type="chain" id="PRO_0000143223" description="Maturase K">
    <location>
        <begin position="1"/>
        <end position="515"/>
    </location>
</feature>
<evidence type="ECO:0000255" key="1">
    <source>
        <dbReference type="HAMAP-Rule" id="MF_01390"/>
    </source>
</evidence>
<sequence length="515" mass="61894">MEELQGYLEEYRSRQQQFLYPLLFQEYIYVFAYDHGLNSSIFYEPQNSLGYDNKFSSVLVKRLIIRMYQKNYLIYSVNDIYQNIFVGHNNYFYFHFFSQILSEGFAVIVEIPFSLQLISSLEEKEIPKSHNLQSSHSIFPFLEDKLLHLNYLSDILIPYPAHMEILVQMLQSWIQDALSLHLLQFLLHEYYNWNSLIIPNKSIYVFSKDNKRLFCFLYNLYIYEYEFLLVFPCKQSSFLRLISSGVLLERIHFYVKIEHLGVCRIFCQKTLWIFKDPFIHYIRYQGKSILGSRGTHFLMKKWKYHLVHFWQYYFHFWSQPYRIDTKKLSNYSFYFLGYFSSVQMNSSMVRNQMLENSFLMDTLTKKLDTRIPIIPLIRSLSKAQFCTVSGYPISKPIWTDLADCDIINRFGRICRKLSHYHSGSSKKQSLYRMKYILRLSCARTLARKHKSSARSFLQRLSSGLLEEFFTEEEQVISLIFPKRTSFYLYGSYRERIWYLDIIRINDLVNSLLVTT</sequence>
<organism>
    <name type="scientific">Alpinia zerumbet</name>
    <name type="common">Shell ginger</name>
    <name type="synonym">Languas speciosa</name>
    <dbReference type="NCBI Taxonomy" id="97723"/>
    <lineage>
        <taxon>Eukaryota</taxon>
        <taxon>Viridiplantae</taxon>
        <taxon>Streptophyta</taxon>
        <taxon>Embryophyta</taxon>
        <taxon>Tracheophyta</taxon>
        <taxon>Spermatophyta</taxon>
        <taxon>Magnoliopsida</taxon>
        <taxon>Liliopsida</taxon>
        <taxon>Zingiberales</taxon>
        <taxon>Zingiberaceae</taxon>
        <taxon>Alpinia</taxon>
    </lineage>
</organism>
<gene>
    <name evidence="1" type="primary">matK</name>
</gene>
<protein>
    <recommendedName>
        <fullName evidence="1">Maturase K</fullName>
    </recommendedName>
    <alternativeName>
        <fullName evidence="1">Intron maturase</fullName>
    </alternativeName>
</protein>
<geneLocation type="chloroplast"/>